<accession>Q2N5Q3</accession>
<organism>
    <name type="scientific">Erythrobacter litoralis (strain HTCC2594)</name>
    <dbReference type="NCBI Taxonomy" id="314225"/>
    <lineage>
        <taxon>Bacteria</taxon>
        <taxon>Pseudomonadati</taxon>
        <taxon>Pseudomonadota</taxon>
        <taxon>Alphaproteobacteria</taxon>
        <taxon>Sphingomonadales</taxon>
        <taxon>Erythrobacteraceae</taxon>
        <taxon>Erythrobacter/Porphyrobacter group</taxon>
        <taxon>Erythrobacter</taxon>
    </lineage>
</organism>
<sequence>MTTTRFAPSPTGRLHVGNIRTALHNWMLAKKHGGRFLLRIDDTDAERSKEEYVHAIRADLAWLGLEPDGEERQSERLEHYEAAFEALKAAGRVYPAYETAQELELKRKIQLGRGLPPIYDRAALKLSDDERAAKEAQGIAPHWRFKLDHDVPITWEDRVRGPQKFDPAQLSDPVIRRADGSWLYMLPSAVDDIDMGITHVLRGEDHVSNTAVQIQMFTALFAAQHDAQQSPPEFAHEALLVGKEGKLSKRLGSLGCDAFRERGIEPEALVAMLARLGTSQPVEPIADRQVLLDTFDLSTFGRAPAKFDDAELERVNTAIVHAMDFEQVKQRLPEGIDAAGWHAIQPNLATVDEAGEWWRLVTGPIEQPEFSDEDRAYLAEAAETLAWDDDPWGTLTAKLKDSTGRKGKALFLPLRQALTGMNHGPDMGELLPLIGEEEARARLQSAADQRGG</sequence>
<reference key="1">
    <citation type="journal article" date="2009" name="J. Bacteriol.">
        <title>Complete genome sequence of Erythrobacter litoralis HTCC2594.</title>
        <authorList>
            <person name="Oh H.M."/>
            <person name="Giovannoni S.J."/>
            <person name="Ferriera S."/>
            <person name="Johnson J."/>
            <person name="Cho J.C."/>
        </authorList>
    </citation>
    <scope>NUCLEOTIDE SEQUENCE [LARGE SCALE GENOMIC DNA]</scope>
    <source>
        <strain>HTCC2594</strain>
    </source>
</reference>
<evidence type="ECO:0000255" key="1">
    <source>
        <dbReference type="HAMAP-Rule" id="MF_00022"/>
    </source>
</evidence>
<evidence type="ECO:0000305" key="2"/>
<name>SYE2_ERYLH</name>
<keyword id="KW-0030">Aminoacyl-tRNA synthetase</keyword>
<keyword id="KW-0067">ATP-binding</keyword>
<keyword id="KW-0963">Cytoplasm</keyword>
<keyword id="KW-0436">Ligase</keyword>
<keyword id="KW-0547">Nucleotide-binding</keyword>
<keyword id="KW-0648">Protein biosynthesis</keyword>
<keyword id="KW-1185">Reference proteome</keyword>
<feature type="chain" id="PRO_0000367669" description="Glutamate--tRNA ligase 2">
    <location>
        <begin position="1"/>
        <end position="452"/>
    </location>
</feature>
<feature type="short sequence motif" description="'HIGH' region" evidence="1">
    <location>
        <begin position="8"/>
        <end position="18"/>
    </location>
</feature>
<feature type="short sequence motif" description="'KMSKS' region" evidence="1">
    <location>
        <begin position="246"/>
        <end position="250"/>
    </location>
</feature>
<feature type="binding site" evidence="1">
    <location>
        <position position="249"/>
    </location>
    <ligand>
        <name>ATP</name>
        <dbReference type="ChEBI" id="CHEBI:30616"/>
    </ligand>
</feature>
<gene>
    <name evidence="1" type="primary">gltX2</name>
    <name type="ordered locus">ELI_14480</name>
</gene>
<proteinExistence type="inferred from homology"/>
<comment type="function">
    <text evidence="1">Catalyzes the attachment of glutamate to tRNA(Glu) in a two-step reaction: glutamate is first activated by ATP to form Glu-AMP and then transferred to the acceptor end of tRNA(Glu).</text>
</comment>
<comment type="catalytic activity">
    <reaction evidence="1">
        <text>tRNA(Glu) + L-glutamate + ATP = L-glutamyl-tRNA(Glu) + AMP + diphosphate</text>
        <dbReference type="Rhea" id="RHEA:23540"/>
        <dbReference type="Rhea" id="RHEA-COMP:9663"/>
        <dbReference type="Rhea" id="RHEA-COMP:9680"/>
        <dbReference type="ChEBI" id="CHEBI:29985"/>
        <dbReference type="ChEBI" id="CHEBI:30616"/>
        <dbReference type="ChEBI" id="CHEBI:33019"/>
        <dbReference type="ChEBI" id="CHEBI:78442"/>
        <dbReference type="ChEBI" id="CHEBI:78520"/>
        <dbReference type="ChEBI" id="CHEBI:456215"/>
        <dbReference type="EC" id="6.1.1.17"/>
    </reaction>
</comment>
<comment type="subunit">
    <text evidence="1">Monomer.</text>
</comment>
<comment type="subcellular location">
    <subcellularLocation>
        <location evidence="1">Cytoplasm</location>
    </subcellularLocation>
</comment>
<comment type="similarity">
    <text evidence="1">Belongs to the class-I aminoacyl-tRNA synthetase family. Glutamate--tRNA ligase type 1 subfamily.</text>
</comment>
<comment type="sequence caution" evidence="2">
    <conflict type="erroneous initiation">
        <sequence resource="EMBL-CDS" id="ABC64988"/>
    </conflict>
</comment>
<protein>
    <recommendedName>
        <fullName evidence="1">Glutamate--tRNA ligase 2</fullName>
        <ecNumber evidence="1">6.1.1.17</ecNumber>
    </recommendedName>
    <alternativeName>
        <fullName evidence="1">Glutamyl-tRNA synthetase 2</fullName>
        <shortName evidence="1">GluRS 2</shortName>
    </alternativeName>
</protein>
<dbReference type="EC" id="6.1.1.17" evidence="1"/>
<dbReference type="EMBL" id="CP000157">
    <property type="protein sequence ID" value="ABC64988.1"/>
    <property type="status" value="ALT_INIT"/>
    <property type="molecule type" value="Genomic_DNA"/>
</dbReference>
<dbReference type="RefSeq" id="WP_041685392.1">
    <property type="nucleotide sequence ID" value="NC_007722.1"/>
</dbReference>
<dbReference type="SMR" id="Q2N5Q3"/>
<dbReference type="STRING" id="314225.ELI_14480"/>
<dbReference type="KEGG" id="eli:ELI_14480"/>
<dbReference type="eggNOG" id="COG0008">
    <property type="taxonomic scope" value="Bacteria"/>
</dbReference>
<dbReference type="eggNOG" id="COG1384">
    <property type="taxonomic scope" value="Bacteria"/>
</dbReference>
<dbReference type="HOGENOM" id="CLU_015768_6_1_5"/>
<dbReference type="OrthoDB" id="9807503at2"/>
<dbReference type="Proteomes" id="UP000008808">
    <property type="component" value="Chromosome"/>
</dbReference>
<dbReference type="GO" id="GO:0005737">
    <property type="term" value="C:cytoplasm"/>
    <property type="evidence" value="ECO:0007669"/>
    <property type="project" value="UniProtKB-SubCell"/>
</dbReference>
<dbReference type="GO" id="GO:0005524">
    <property type="term" value="F:ATP binding"/>
    <property type="evidence" value="ECO:0007669"/>
    <property type="project" value="UniProtKB-UniRule"/>
</dbReference>
<dbReference type="GO" id="GO:0004818">
    <property type="term" value="F:glutamate-tRNA ligase activity"/>
    <property type="evidence" value="ECO:0007669"/>
    <property type="project" value="UniProtKB-UniRule"/>
</dbReference>
<dbReference type="GO" id="GO:0000049">
    <property type="term" value="F:tRNA binding"/>
    <property type="evidence" value="ECO:0007669"/>
    <property type="project" value="InterPro"/>
</dbReference>
<dbReference type="GO" id="GO:0006424">
    <property type="term" value="P:glutamyl-tRNA aminoacylation"/>
    <property type="evidence" value="ECO:0007669"/>
    <property type="project" value="UniProtKB-UniRule"/>
</dbReference>
<dbReference type="Gene3D" id="1.10.10.350">
    <property type="match status" value="1"/>
</dbReference>
<dbReference type="Gene3D" id="3.40.50.620">
    <property type="entry name" value="HUPs"/>
    <property type="match status" value="1"/>
</dbReference>
<dbReference type="HAMAP" id="MF_00022">
    <property type="entry name" value="Glu_tRNA_synth_type1"/>
    <property type="match status" value="1"/>
</dbReference>
<dbReference type="InterPro" id="IPR045462">
    <property type="entry name" value="aa-tRNA-synth_I_cd-bd"/>
</dbReference>
<dbReference type="InterPro" id="IPR020751">
    <property type="entry name" value="aa-tRNA-synth_I_codon-bd_sub2"/>
</dbReference>
<dbReference type="InterPro" id="IPR001412">
    <property type="entry name" value="aa-tRNA-synth_I_CS"/>
</dbReference>
<dbReference type="InterPro" id="IPR008925">
    <property type="entry name" value="aa_tRNA-synth_I_cd-bd_sf"/>
</dbReference>
<dbReference type="InterPro" id="IPR004527">
    <property type="entry name" value="Glu-tRNA-ligase_bac/mito"/>
</dbReference>
<dbReference type="InterPro" id="IPR000924">
    <property type="entry name" value="Glu/Gln-tRNA-synth"/>
</dbReference>
<dbReference type="InterPro" id="IPR020058">
    <property type="entry name" value="Glu/Gln-tRNA-synth_Ib_cat-dom"/>
</dbReference>
<dbReference type="InterPro" id="IPR049940">
    <property type="entry name" value="GluQ/Sye"/>
</dbReference>
<dbReference type="InterPro" id="IPR014729">
    <property type="entry name" value="Rossmann-like_a/b/a_fold"/>
</dbReference>
<dbReference type="NCBIfam" id="TIGR00464">
    <property type="entry name" value="gltX_bact"/>
    <property type="match status" value="1"/>
</dbReference>
<dbReference type="PANTHER" id="PTHR43311">
    <property type="entry name" value="GLUTAMATE--TRNA LIGASE"/>
    <property type="match status" value="1"/>
</dbReference>
<dbReference type="PANTHER" id="PTHR43311:SF2">
    <property type="entry name" value="GLUTAMATE--TRNA LIGASE, MITOCHONDRIAL-RELATED"/>
    <property type="match status" value="1"/>
</dbReference>
<dbReference type="Pfam" id="PF19269">
    <property type="entry name" value="Anticodon_2"/>
    <property type="match status" value="1"/>
</dbReference>
<dbReference type="Pfam" id="PF00749">
    <property type="entry name" value="tRNA-synt_1c"/>
    <property type="match status" value="1"/>
</dbReference>
<dbReference type="PRINTS" id="PR00987">
    <property type="entry name" value="TRNASYNTHGLU"/>
</dbReference>
<dbReference type="SUPFAM" id="SSF48163">
    <property type="entry name" value="An anticodon-binding domain of class I aminoacyl-tRNA synthetases"/>
    <property type="match status" value="1"/>
</dbReference>
<dbReference type="SUPFAM" id="SSF52374">
    <property type="entry name" value="Nucleotidylyl transferase"/>
    <property type="match status" value="1"/>
</dbReference>
<dbReference type="PROSITE" id="PS00178">
    <property type="entry name" value="AA_TRNA_LIGASE_I"/>
    <property type="match status" value="1"/>
</dbReference>